<comment type="function">
    <text evidence="1">Binds to 23S rRNA. Forms part of two intersubunit bridges in the 70S ribosome.</text>
</comment>
<comment type="subunit">
    <text evidence="1">Part of the 50S ribosomal subunit. Forms a cluster with proteins L3 and L19. In the 70S ribosome, L14 and L19 interact and together make contacts with the 16S rRNA in bridges B5 and B8.</text>
</comment>
<comment type="similarity">
    <text evidence="1">Belongs to the universal ribosomal protein uL14 family.</text>
</comment>
<protein>
    <recommendedName>
        <fullName evidence="1">Large ribosomal subunit protein uL14</fullName>
    </recommendedName>
    <alternativeName>
        <fullName evidence="2">50S ribosomal protein L14</fullName>
    </alternativeName>
</protein>
<dbReference type="EMBL" id="CP000948">
    <property type="protein sequence ID" value="ACB04372.1"/>
    <property type="molecule type" value="Genomic_DNA"/>
</dbReference>
<dbReference type="RefSeq" id="WP_000613955.1">
    <property type="nucleotide sequence ID" value="NC_010473.1"/>
</dbReference>
<dbReference type="SMR" id="B1X6G2"/>
<dbReference type="GeneID" id="93778677"/>
<dbReference type="KEGG" id="ecd:ECDH10B_3485"/>
<dbReference type="HOGENOM" id="CLU_095071_2_1_6"/>
<dbReference type="GO" id="GO:0022625">
    <property type="term" value="C:cytosolic large ribosomal subunit"/>
    <property type="evidence" value="ECO:0007669"/>
    <property type="project" value="TreeGrafter"/>
</dbReference>
<dbReference type="GO" id="GO:0070180">
    <property type="term" value="F:large ribosomal subunit rRNA binding"/>
    <property type="evidence" value="ECO:0007669"/>
    <property type="project" value="TreeGrafter"/>
</dbReference>
<dbReference type="GO" id="GO:0003735">
    <property type="term" value="F:structural constituent of ribosome"/>
    <property type="evidence" value="ECO:0007669"/>
    <property type="project" value="InterPro"/>
</dbReference>
<dbReference type="GO" id="GO:0006412">
    <property type="term" value="P:translation"/>
    <property type="evidence" value="ECO:0007669"/>
    <property type="project" value="UniProtKB-UniRule"/>
</dbReference>
<dbReference type="CDD" id="cd00337">
    <property type="entry name" value="Ribosomal_uL14"/>
    <property type="match status" value="1"/>
</dbReference>
<dbReference type="FunFam" id="2.40.150.20:FF:000001">
    <property type="entry name" value="50S ribosomal protein L14"/>
    <property type="match status" value="1"/>
</dbReference>
<dbReference type="Gene3D" id="2.40.150.20">
    <property type="entry name" value="Ribosomal protein L14"/>
    <property type="match status" value="1"/>
</dbReference>
<dbReference type="HAMAP" id="MF_01367">
    <property type="entry name" value="Ribosomal_uL14"/>
    <property type="match status" value="1"/>
</dbReference>
<dbReference type="InterPro" id="IPR000218">
    <property type="entry name" value="Ribosomal_uL14"/>
</dbReference>
<dbReference type="InterPro" id="IPR005745">
    <property type="entry name" value="Ribosomal_uL14_bac-type"/>
</dbReference>
<dbReference type="InterPro" id="IPR019972">
    <property type="entry name" value="Ribosomal_uL14_CS"/>
</dbReference>
<dbReference type="InterPro" id="IPR036853">
    <property type="entry name" value="Ribosomal_uL14_sf"/>
</dbReference>
<dbReference type="NCBIfam" id="TIGR01067">
    <property type="entry name" value="rplN_bact"/>
    <property type="match status" value="1"/>
</dbReference>
<dbReference type="PANTHER" id="PTHR11761">
    <property type="entry name" value="50S/60S RIBOSOMAL PROTEIN L14/L23"/>
    <property type="match status" value="1"/>
</dbReference>
<dbReference type="PANTHER" id="PTHR11761:SF3">
    <property type="entry name" value="LARGE RIBOSOMAL SUBUNIT PROTEIN UL14M"/>
    <property type="match status" value="1"/>
</dbReference>
<dbReference type="Pfam" id="PF00238">
    <property type="entry name" value="Ribosomal_L14"/>
    <property type="match status" value="1"/>
</dbReference>
<dbReference type="SMART" id="SM01374">
    <property type="entry name" value="Ribosomal_L14"/>
    <property type="match status" value="1"/>
</dbReference>
<dbReference type="SUPFAM" id="SSF50193">
    <property type="entry name" value="Ribosomal protein L14"/>
    <property type="match status" value="1"/>
</dbReference>
<dbReference type="PROSITE" id="PS00049">
    <property type="entry name" value="RIBOSOMAL_L14"/>
    <property type="match status" value="1"/>
</dbReference>
<sequence>MIQEQTMLNVADNSGARRVMCIKVLGGSHRRYAGVGDIIKITIKEAIPRGKVKKGDVLKAVVVRTKKGVRRPDGSVIRFDGNACVLLNNNSEQPIGTRIFGPVTRELRSEKFMKIISLAPEVL</sequence>
<gene>
    <name evidence="1" type="primary">rplN</name>
    <name type="ordered locus">ECDH10B_3485</name>
</gene>
<keyword id="KW-0687">Ribonucleoprotein</keyword>
<keyword id="KW-0689">Ribosomal protein</keyword>
<keyword id="KW-0694">RNA-binding</keyword>
<keyword id="KW-0699">rRNA-binding</keyword>
<accession>B1X6G2</accession>
<reference key="1">
    <citation type="journal article" date="2008" name="J. Bacteriol.">
        <title>The complete genome sequence of Escherichia coli DH10B: insights into the biology of a laboratory workhorse.</title>
        <authorList>
            <person name="Durfee T."/>
            <person name="Nelson R."/>
            <person name="Baldwin S."/>
            <person name="Plunkett G. III"/>
            <person name="Burland V."/>
            <person name="Mau B."/>
            <person name="Petrosino J.F."/>
            <person name="Qin X."/>
            <person name="Muzny D.M."/>
            <person name="Ayele M."/>
            <person name="Gibbs R.A."/>
            <person name="Csorgo B."/>
            <person name="Posfai G."/>
            <person name="Weinstock G.M."/>
            <person name="Blattner F.R."/>
        </authorList>
    </citation>
    <scope>NUCLEOTIDE SEQUENCE [LARGE SCALE GENOMIC DNA]</scope>
    <source>
        <strain>K12 / DH10B</strain>
    </source>
</reference>
<evidence type="ECO:0000255" key="1">
    <source>
        <dbReference type="HAMAP-Rule" id="MF_01367"/>
    </source>
</evidence>
<evidence type="ECO:0000305" key="2"/>
<proteinExistence type="inferred from homology"/>
<name>RL14_ECODH</name>
<organism>
    <name type="scientific">Escherichia coli (strain K12 / DH10B)</name>
    <dbReference type="NCBI Taxonomy" id="316385"/>
    <lineage>
        <taxon>Bacteria</taxon>
        <taxon>Pseudomonadati</taxon>
        <taxon>Pseudomonadota</taxon>
        <taxon>Gammaproteobacteria</taxon>
        <taxon>Enterobacterales</taxon>
        <taxon>Enterobacteriaceae</taxon>
        <taxon>Escherichia</taxon>
    </lineage>
</organism>
<feature type="chain" id="PRO_1000144266" description="Large ribosomal subunit protein uL14">
    <location>
        <begin position="1"/>
        <end position="123"/>
    </location>
</feature>